<name>HIS1_SORC5</name>
<keyword id="KW-0028">Amino-acid biosynthesis</keyword>
<keyword id="KW-0067">ATP-binding</keyword>
<keyword id="KW-0963">Cytoplasm</keyword>
<keyword id="KW-0328">Glycosyltransferase</keyword>
<keyword id="KW-0368">Histidine biosynthesis</keyword>
<keyword id="KW-0547">Nucleotide-binding</keyword>
<keyword id="KW-1185">Reference proteome</keyword>
<keyword id="KW-0808">Transferase</keyword>
<proteinExistence type="inferred from homology"/>
<feature type="chain" id="PRO_1000084160" description="ATP phosphoribosyltransferase">
    <location>
        <begin position="1"/>
        <end position="211"/>
    </location>
</feature>
<reference key="1">
    <citation type="journal article" date="2007" name="Nat. Biotechnol.">
        <title>Complete genome sequence of the myxobacterium Sorangium cellulosum.</title>
        <authorList>
            <person name="Schneiker S."/>
            <person name="Perlova O."/>
            <person name="Kaiser O."/>
            <person name="Gerth K."/>
            <person name="Alici A."/>
            <person name="Altmeyer M.O."/>
            <person name="Bartels D."/>
            <person name="Bekel T."/>
            <person name="Beyer S."/>
            <person name="Bode E."/>
            <person name="Bode H.B."/>
            <person name="Bolten C.J."/>
            <person name="Choudhuri J.V."/>
            <person name="Doss S."/>
            <person name="Elnakady Y.A."/>
            <person name="Frank B."/>
            <person name="Gaigalat L."/>
            <person name="Goesmann A."/>
            <person name="Groeger C."/>
            <person name="Gross F."/>
            <person name="Jelsbak L."/>
            <person name="Jelsbak L."/>
            <person name="Kalinowski J."/>
            <person name="Kegler C."/>
            <person name="Knauber T."/>
            <person name="Konietzny S."/>
            <person name="Kopp M."/>
            <person name="Krause L."/>
            <person name="Krug D."/>
            <person name="Linke B."/>
            <person name="Mahmud T."/>
            <person name="Martinez-Arias R."/>
            <person name="McHardy A.C."/>
            <person name="Merai M."/>
            <person name="Meyer F."/>
            <person name="Mormann S."/>
            <person name="Munoz-Dorado J."/>
            <person name="Perez J."/>
            <person name="Pradella S."/>
            <person name="Rachid S."/>
            <person name="Raddatz G."/>
            <person name="Rosenau F."/>
            <person name="Rueckert C."/>
            <person name="Sasse F."/>
            <person name="Scharfe M."/>
            <person name="Schuster S.C."/>
            <person name="Suen G."/>
            <person name="Treuner-Lange A."/>
            <person name="Velicer G.J."/>
            <person name="Vorholter F.-J."/>
            <person name="Weissman K.J."/>
            <person name="Welch R.D."/>
            <person name="Wenzel S.C."/>
            <person name="Whitworth D.E."/>
            <person name="Wilhelm S."/>
            <person name="Wittmann C."/>
            <person name="Bloecker H."/>
            <person name="Puehler A."/>
            <person name="Mueller R."/>
        </authorList>
    </citation>
    <scope>NUCLEOTIDE SEQUENCE [LARGE SCALE GENOMIC DNA]</scope>
    <source>
        <strain>So ce56</strain>
    </source>
</reference>
<sequence length="211" mass="23089">MTKPLTIAVPKGRILKDLIPLVRRAGLDSTPLEENDRRLVRPTADGAFRYVFLKPDDVPTYVEYGAADLGVSGRDTLLERRHDLYTPLDLGIGRCRLVVAGPEDTEVPDLPRVATKYPRIAGDHFASKGVVAEIIPVHGSVELAPLVGLSHLIVDIVETGSTLRENRLEVLETVTEVSTQLIANRASYKLRSDVIRPLVERLRAATAGAGR</sequence>
<organism>
    <name type="scientific">Sorangium cellulosum (strain So ce56)</name>
    <name type="common">Polyangium cellulosum (strain So ce56)</name>
    <dbReference type="NCBI Taxonomy" id="448385"/>
    <lineage>
        <taxon>Bacteria</taxon>
        <taxon>Pseudomonadati</taxon>
        <taxon>Myxococcota</taxon>
        <taxon>Polyangia</taxon>
        <taxon>Polyangiales</taxon>
        <taxon>Polyangiaceae</taxon>
        <taxon>Sorangium</taxon>
    </lineage>
</organism>
<comment type="function">
    <text evidence="1">Catalyzes the condensation of ATP and 5-phosphoribose 1-diphosphate to form N'-(5'-phosphoribosyl)-ATP (PR-ATP). Has a crucial role in the pathway because the rate of histidine biosynthesis seems to be controlled primarily by regulation of HisG enzymatic activity.</text>
</comment>
<comment type="catalytic activity">
    <reaction evidence="1">
        <text>1-(5-phospho-beta-D-ribosyl)-ATP + diphosphate = 5-phospho-alpha-D-ribose 1-diphosphate + ATP</text>
        <dbReference type="Rhea" id="RHEA:18473"/>
        <dbReference type="ChEBI" id="CHEBI:30616"/>
        <dbReference type="ChEBI" id="CHEBI:33019"/>
        <dbReference type="ChEBI" id="CHEBI:58017"/>
        <dbReference type="ChEBI" id="CHEBI:73183"/>
        <dbReference type="EC" id="2.4.2.17"/>
    </reaction>
</comment>
<comment type="pathway">
    <text evidence="1">Amino-acid biosynthesis; L-histidine biosynthesis; L-histidine from 5-phospho-alpha-D-ribose 1-diphosphate: step 1/9.</text>
</comment>
<comment type="subunit">
    <text evidence="1">Heteromultimer composed of HisG and HisZ subunits.</text>
</comment>
<comment type="subcellular location">
    <subcellularLocation>
        <location evidence="1">Cytoplasm</location>
    </subcellularLocation>
</comment>
<comment type="domain">
    <text>Lacks the C-terminal regulatory region which is replaced by HisZ.</text>
</comment>
<comment type="similarity">
    <text evidence="1">Belongs to the ATP phosphoribosyltransferase family. Short subfamily.</text>
</comment>
<gene>
    <name evidence="1" type="primary">hisG</name>
    <name type="ordered locus">sce9144</name>
</gene>
<evidence type="ECO:0000255" key="1">
    <source>
        <dbReference type="HAMAP-Rule" id="MF_01018"/>
    </source>
</evidence>
<protein>
    <recommendedName>
        <fullName evidence="1">ATP phosphoribosyltransferase</fullName>
        <shortName evidence="1">ATP-PRT</shortName>
        <shortName evidence="1">ATP-PRTase</shortName>
        <ecNumber evidence="1">2.4.2.17</ecNumber>
    </recommendedName>
</protein>
<accession>A9GD69</accession>
<dbReference type="EC" id="2.4.2.17" evidence="1"/>
<dbReference type="EMBL" id="AM746676">
    <property type="protein sequence ID" value="CAN99317.1"/>
    <property type="molecule type" value="Genomic_DNA"/>
</dbReference>
<dbReference type="RefSeq" id="WP_012241753.1">
    <property type="nucleotide sequence ID" value="NC_010162.1"/>
</dbReference>
<dbReference type="SMR" id="A9GD69"/>
<dbReference type="STRING" id="448385.sce9144"/>
<dbReference type="KEGG" id="scl:sce9144"/>
<dbReference type="eggNOG" id="COG0040">
    <property type="taxonomic scope" value="Bacteria"/>
</dbReference>
<dbReference type="HOGENOM" id="CLU_038115_2_0_7"/>
<dbReference type="OrthoDB" id="9801867at2"/>
<dbReference type="BioCyc" id="SCEL448385:SCE_RS46805-MONOMER"/>
<dbReference type="UniPathway" id="UPA00031">
    <property type="reaction ID" value="UER00006"/>
</dbReference>
<dbReference type="Proteomes" id="UP000002139">
    <property type="component" value="Chromosome"/>
</dbReference>
<dbReference type="GO" id="GO:0005737">
    <property type="term" value="C:cytoplasm"/>
    <property type="evidence" value="ECO:0007669"/>
    <property type="project" value="UniProtKB-SubCell"/>
</dbReference>
<dbReference type="GO" id="GO:0005524">
    <property type="term" value="F:ATP binding"/>
    <property type="evidence" value="ECO:0007669"/>
    <property type="project" value="UniProtKB-KW"/>
</dbReference>
<dbReference type="GO" id="GO:0003879">
    <property type="term" value="F:ATP phosphoribosyltransferase activity"/>
    <property type="evidence" value="ECO:0007669"/>
    <property type="project" value="UniProtKB-UniRule"/>
</dbReference>
<dbReference type="GO" id="GO:0000105">
    <property type="term" value="P:L-histidine biosynthetic process"/>
    <property type="evidence" value="ECO:0007669"/>
    <property type="project" value="UniProtKB-UniRule"/>
</dbReference>
<dbReference type="CDD" id="cd13595">
    <property type="entry name" value="PBP2_HisGs"/>
    <property type="match status" value="1"/>
</dbReference>
<dbReference type="FunFam" id="3.40.190.10:FF:000008">
    <property type="entry name" value="ATP phosphoribosyltransferase"/>
    <property type="match status" value="1"/>
</dbReference>
<dbReference type="Gene3D" id="3.40.190.10">
    <property type="entry name" value="Periplasmic binding protein-like II"/>
    <property type="match status" value="2"/>
</dbReference>
<dbReference type="HAMAP" id="MF_01018">
    <property type="entry name" value="HisG_Short"/>
    <property type="match status" value="1"/>
</dbReference>
<dbReference type="InterPro" id="IPR013820">
    <property type="entry name" value="ATP_PRibTrfase_cat"/>
</dbReference>
<dbReference type="InterPro" id="IPR018198">
    <property type="entry name" value="ATP_PRibTrfase_CS"/>
</dbReference>
<dbReference type="InterPro" id="IPR001348">
    <property type="entry name" value="ATP_PRibTrfase_HisG"/>
</dbReference>
<dbReference type="InterPro" id="IPR024893">
    <property type="entry name" value="ATP_PRibTrfase_HisG_short"/>
</dbReference>
<dbReference type="NCBIfam" id="TIGR00070">
    <property type="entry name" value="hisG"/>
    <property type="match status" value="1"/>
</dbReference>
<dbReference type="PANTHER" id="PTHR21403:SF8">
    <property type="entry name" value="ATP PHOSPHORIBOSYLTRANSFERASE"/>
    <property type="match status" value="1"/>
</dbReference>
<dbReference type="PANTHER" id="PTHR21403">
    <property type="entry name" value="ATP PHOSPHORIBOSYLTRANSFERASE ATP-PRTASE"/>
    <property type="match status" value="1"/>
</dbReference>
<dbReference type="Pfam" id="PF01634">
    <property type="entry name" value="HisG"/>
    <property type="match status" value="1"/>
</dbReference>
<dbReference type="SUPFAM" id="SSF53850">
    <property type="entry name" value="Periplasmic binding protein-like II"/>
    <property type="match status" value="1"/>
</dbReference>
<dbReference type="PROSITE" id="PS01316">
    <property type="entry name" value="ATP_P_PHORIBOSYLTR"/>
    <property type="match status" value="1"/>
</dbReference>